<reference key="1">
    <citation type="journal article" date="1999" name="Biochim. Biophys. Acta">
        <title>Identity of heart and liver L-3-hydroxyacyl coenzyme A dehydrogenase.</title>
        <authorList>
            <person name="He X.-Y."/>
            <person name="Zhang G."/>
            <person name="Blecha F."/>
            <person name="Yang S.-Y."/>
        </authorList>
    </citation>
    <scope>NUCLEOTIDE SEQUENCE [MRNA]</scope>
    <source>
        <strain>Sprague-Dawley</strain>
        <tissue>Heart muscle</tissue>
        <tissue>Liver</tissue>
    </source>
</reference>
<protein>
    <recommendedName>
        <fullName>Hydroxyacyl-coenzyme A dehydrogenase, mitochondrial</fullName>
        <shortName>HCDH</shortName>
        <ecNumber evidence="1">1.1.1.35</ecNumber>
    </recommendedName>
    <alternativeName>
        <fullName>Medium and short-chain L-3-hydroxyacyl-coenzyme A dehydrogenase</fullName>
    </alternativeName>
    <alternativeName>
        <fullName>Short-chain 3-hydroxyacyl-CoA dehydrogenase</fullName>
    </alternativeName>
</protein>
<organism>
    <name type="scientific">Rattus norvegicus</name>
    <name type="common">Rat</name>
    <dbReference type="NCBI Taxonomy" id="10116"/>
    <lineage>
        <taxon>Eukaryota</taxon>
        <taxon>Metazoa</taxon>
        <taxon>Chordata</taxon>
        <taxon>Craniata</taxon>
        <taxon>Vertebrata</taxon>
        <taxon>Euteleostomi</taxon>
        <taxon>Mammalia</taxon>
        <taxon>Eutheria</taxon>
        <taxon>Euarchontoglires</taxon>
        <taxon>Glires</taxon>
        <taxon>Rodentia</taxon>
        <taxon>Myomorpha</taxon>
        <taxon>Muroidea</taxon>
        <taxon>Muridae</taxon>
        <taxon>Murinae</taxon>
        <taxon>Rattus</taxon>
    </lineage>
</organism>
<comment type="function">
    <text evidence="2 3">Mitochondrial fatty acid beta-oxidation enzyme that catalyzes the third step of the beta-oxidation cycle for medium and short-chain 3-hydroxy fatty acyl-CoAs (C4 to C10) (By similarity). Plays a role in the control of insulin secretion by inhibiting the activation of glutamate dehydrogenase 1 (GLUD1), an enzyme that has an important role in regulating amino acid-induced insulin secretion (By similarity). Plays a role in the maintenance of normal spermatogenesis through the reduction of fatty acid accumulation in the testes (By similarity).</text>
</comment>
<comment type="catalytic activity">
    <reaction evidence="1">
        <text>a (3S)-3-hydroxyacyl-CoA + NAD(+) = a 3-oxoacyl-CoA + NADH + H(+)</text>
        <dbReference type="Rhea" id="RHEA:22432"/>
        <dbReference type="ChEBI" id="CHEBI:15378"/>
        <dbReference type="ChEBI" id="CHEBI:57318"/>
        <dbReference type="ChEBI" id="CHEBI:57540"/>
        <dbReference type="ChEBI" id="CHEBI:57945"/>
        <dbReference type="ChEBI" id="CHEBI:90726"/>
        <dbReference type="EC" id="1.1.1.35"/>
    </reaction>
</comment>
<comment type="catalytic activity">
    <reaction evidence="1">
        <text>(3S)-3-hydroxybutanoyl-CoA + NAD(+) = acetoacetyl-CoA + NADH + H(+)</text>
        <dbReference type="Rhea" id="RHEA:30799"/>
        <dbReference type="ChEBI" id="CHEBI:15378"/>
        <dbReference type="ChEBI" id="CHEBI:57286"/>
        <dbReference type="ChEBI" id="CHEBI:57316"/>
        <dbReference type="ChEBI" id="CHEBI:57540"/>
        <dbReference type="ChEBI" id="CHEBI:57945"/>
    </reaction>
</comment>
<comment type="catalytic activity">
    <reaction evidence="1">
        <text>(3S)-hydroxydecanoyl-CoA + NAD(+) = 3-oxodecanoyl-CoA + NADH + H(+)</text>
        <dbReference type="Rhea" id="RHEA:31187"/>
        <dbReference type="ChEBI" id="CHEBI:15378"/>
        <dbReference type="ChEBI" id="CHEBI:57540"/>
        <dbReference type="ChEBI" id="CHEBI:57945"/>
        <dbReference type="ChEBI" id="CHEBI:62548"/>
        <dbReference type="ChEBI" id="CHEBI:62616"/>
    </reaction>
</comment>
<comment type="catalytic activity">
    <reaction evidence="1">
        <text>(3S)-hydroxyhexadecanoyl-CoA + NAD(+) = 3-oxohexadecanoyl-CoA + NADH + H(+)</text>
        <dbReference type="Rhea" id="RHEA:31159"/>
        <dbReference type="ChEBI" id="CHEBI:15378"/>
        <dbReference type="ChEBI" id="CHEBI:57349"/>
        <dbReference type="ChEBI" id="CHEBI:57540"/>
        <dbReference type="ChEBI" id="CHEBI:57945"/>
        <dbReference type="ChEBI" id="CHEBI:62613"/>
    </reaction>
</comment>
<comment type="pathway">
    <text>Lipid metabolism; fatty acid beta-oxidation.</text>
</comment>
<comment type="subunit">
    <text evidence="1 3">Homodimer (By similarity). Interacts with GLUD1; this interaction inhibits the activation of glutamate dehydrogenase 1 (GLUD1) (By similarity).</text>
</comment>
<comment type="subcellular location">
    <subcellularLocation>
        <location evidence="1">Mitochondrion matrix</location>
    </subcellularLocation>
</comment>
<comment type="PTM">
    <text evidence="3">Succinylation at Lys-81, adjacent to a coenzyme A binding site. Desuccinylated by SIRT5.</text>
</comment>
<comment type="similarity">
    <text evidence="4">Belongs to the 3-hydroxyacyl-CoA dehydrogenase family.</text>
</comment>
<gene>
    <name type="primary">Hadh</name>
    <name type="synonym">Had</name>
    <name type="synonym">Hadhsc</name>
    <name type="synonym">Schad</name>
</gene>
<sequence length="314" mass="34448">MAFVTRQFVRSMSSSSSASAAAKKILIKHVTVIGGGLMGAGIAQVAAATGHTVVLVDQTEDILAKSKKGIEESLKRMAKKKFTENPKAADEFVEKTLSSLSTSTDAASVVHSTDLVVEAIVENLKLKNELFQRLDKFAAEHTIFASNTSSLQITNIANATTRQDRFAGLHFFNPVPMMKLVEVIKTPMTSQKTFESLVDFCKTLGKHPVSCKDTPGFIVNRLLVPYLIEAIRLHERGDASKEDIDTAMKLGAGYPMGPFELLDYVGLDTTKFILDGWHEMDPENPLFQPSPSMNNLVAQKKLGKKTGEGFYKYK</sequence>
<keyword id="KW-0007">Acetylation</keyword>
<keyword id="KW-0221">Differentiation</keyword>
<keyword id="KW-0276">Fatty acid metabolism</keyword>
<keyword id="KW-0379">Hydroxylation</keyword>
<keyword id="KW-0443">Lipid metabolism</keyword>
<keyword id="KW-0496">Mitochondrion</keyword>
<keyword id="KW-0520">NAD</keyword>
<keyword id="KW-0560">Oxidoreductase</keyword>
<keyword id="KW-1185">Reference proteome</keyword>
<keyword id="KW-0744">Spermatogenesis</keyword>
<keyword id="KW-0809">Transit peptide</keyword>
<name>HCDH_RAT</name>
<evidence type="ECO:0000250" key="1">
    <source>
        <dbReference type="UniProtKB" id="P00348"/>
    </source>
</evidence>
<evidence type="ECO:0000250" key="2">
    <source>
        <dbReference type="UniProtKB" id="Q16836"/>
    </source>
</evidence>
<evidence type="ECO:0000250" key="3">
    <source>
        <dbReference type="UniProtKB" id="Q61425"/>
    </source>
</evidence>
<evidence type="ECO:0000305" key="4"/>
<dbReference type="EC" id="1.1.1.35" evidence="1"/>
<dbReference type="EMBL" id="AF095449">
    <property type="protein sequence ID" value="AAD42162.1"/>
    <property type="molecule type" value="mRNA"/>
</dbReference>
<dbReference type="PIR" id="S74114">
    <property type="entry name" value="S74114"/>
</dbReference>
<dbReference type="RefSeq" id="NP_476534.1">
    <property type="nucleotide sequence ID" value="NM_057186.2"/>
</dbReference>
<dbReference type="SMR" id="Q9WVK7"/>
<dbReference type="BioGRID" id="250240">
    <property type="interactions" value="2"/>
</dbReference>
<dbReference type="FunCoup" id="Q9WVK7">
    <property type="interactions" value="1626"/>
</dbReference>
<dbReference type="IntAct" id="Q9WVK7">
    <property type="interactions" value="2"/>
</dbReference>
<dbReference type="MINT" id="Q9WVK7"/>
<dbReference type="STRING" id="10116.ENSRNOP00000014658"/>
<dbReference type="ChEMBL" id="CHEMBL2176821"/>
<dbReference type="GlyGen" id="Q9WVK7">
    <property type="glycosylation" value="2 sites, 1 O-linked glycan (2 sites)"/>
</dbReference>
<dbReference type="iPTMnet" id="Q9WVK7"/>
<dbReference type="PhosphoSitePlus" id="Q9WVK7"/>
<dbReference type="jPOST" id="Q9WVK7"/>
<dbReference type="PaxDb" id="10116-ENSRNOP00000014658"/>
<dbReference type="Ensembl" id="ENSRNOT00000014658.3">
    <property type="protein sequence ID" value="ENSRNOP00000014658.1"/>
    <property type="gene ID" value="ENSRNOG00000010697.3"/>
</dbReference>
<dbReference type="GeneID" id="113965"/>
<dbReference type="KEGG" id="rno:113965"/>
<dbReference type="AGR" id="RGD:69321"/>
<dbReference type="CTD" id="3033"/>
<dbReference type="RGD" id="69321">
    <property type="gene designation" value="Hadh"/>
</dbReference>
<dbReference type="eggNOG" id="KOG2304">
    <property type="taxonomic scope" value="Eukaryota"/>
</dbReference>
<dbReference type="GeneTree" id="ENSGT00940000159984"/>
<dbReference type="HOGENOM" id="CLU_009834_2_0_1"/>
<dbReference type="InParanoid" id="Q9WVK7"/>
<dbReference type="OMA" id="MAHPMGP"/>
<dbReference type="OrthoDB" id="5958943at2759"/>
<dbReference type="PhylomeDB" id="Q9WVK7"/>
<dbReference type="TreeFam" id="TF300886"/>
<dbReference type="Reactome" id="R-RNO-77310">
    <property type="pathway name" value="Beta oxidation of lauroyl-CoA to decanoyl-CoA-CoA"/>
</dbReference>
<dbReference type="Reactome" id="R-RNO-77346">
    <property type="pathway name" value="Beta oxidation of decanoyl-CoA to octanoyl-CoA-CoA"/>
</dbReference>
<dbReference type="Reactome" id="R-RNO-77348">
    <property type="pathway name" value="Beta oxidation of octanoyl-CoA to hexanoyl-CoA"/>
</dbReference>
<dbReference type="Reactome" id="R-RNO-77350">
    <property type="pathway name" value="Beta oxidation of hexanoyl-CoA to butanoyl-CoA"/>
</dbReference>
<dbReference type="Reactome" id="R-RNO-77352">
    <property type="pathway name" value="Beta oxidation of butanoyl-CoA to acetyl-CoA"/>
</dbReference>
<dbReference type="Reactome" id="R-RNO-9837999">
    <property type="pathway name" value="Mitochondrial protein degradation"/>
</dbReference>
<dbReference type="SABIO-RK" id="Q9WVK7"/>
<dbReference type="UniPathway" id="UPA00659"/>
<dbReference type="PRO" id="PR:Q9WVK7"/>
<dbReference type="Proteomes" id="UP000002494">
    <property type="component" value="Chromosome 2"/>
</dbReference>
<dbReference type="Bgee" id="ENSRNOG00000010697">
    <property type="expression patterns" value="Expressed in heart and 19 other cell types or tissues"/>
</dbReference>
<dbReference type="GO" id="GO:0005759">
    <property type="term" value="C:mitochondrial matrix"/>
    <property type="evidence" value="ECO:0007669"/>
    <property type="project" value="UniProtKB-SubCell"/>
</dbReference>
<dbReference type="GO" id="GO:0005739">
    <property type="term" value="C:mitochondrion"/>
    <property type="evidence" value="ECO:0000266"/>
    <property type="project" value="RGD"/>
</dbReference>
<dbReference type="GO" id="GO:0005654">
    <property type="term" value="C:nucleoplasm"/>
    <property type="evidence" value="ECO:0007669"/>
    <property type="project" value="Ensembl"/>
</dbReference>
<dbReference type="GO" id="GO:0003857">
    <property type="term" value="F:3-hydroxyacyl-CoA dehydrogenase activity"/>
    <property type="evidence" value="ECO:0000315"/>
    <property type="project" value="RGD"/>
</dbReference>
<dbReference type="GO" id="GO:0042802">
    <property type="term" value="F:identical protein binding"/>
    <property type="evidence" value="ECO:0000250"/>
    <property type="project" value="UniProtKB"/>
</dbReference>
<dbReference type="GO" id="GO:0070403">
    <property type="term" value="F:NAD+ binding"/>
    <property type="evidence" value="ECO:0000250"/>
    <property type="project" value="UniProtKB"/>
</dbReference>
<dbReference type="GO" id="GO:0030154">
    <property type="term" value="P:cell differentiation"/>
    <property type="evidence" value="ECO:0007669"/>
    <property type="project" value="UniProtKB-KW"/>
</dbReference>
<dbReference type="GO" id="GO:0006635">
    <property type="term" value="P:fatty acid beta-oxidation"/>
    <property type="evidence" value="ECO:0000315"/>
    <property type="project" value="RGD"/>
</dbReference>
<dbReference type="GO" id="GO:0046676">
    <property type="term" value="P:negative regulation of insulin secretion"/>
    <property type="evidence" value="ECO:0000315"/>
    <property type="project" value="RGD"/>
</dbReference>
<dbReference type="GO" id="GO:0120162">
    <property type="term" value="P:positive regulation of cold-induced thermogenesis"/>
    <property type="evidence" value="ECO:0000250"/>
    <property type="project" value="YuBioLab"/>
</dbReference>
<dbReference type="GO" id="GO:0050796">
    <property type="term" value="P:regulation of insulin secretion"/>
    <property type="evidence" value="ECO:0000250"/>
    <property type="project" value="UniProtKB"/>
</dbReference>
<dbReference type="GO" id="GO:0014823">
    <property type="term" value="P:response to activity"/>
    <property type="evidence" value="ECO:0000314"/>
    <property type="project" value="RGD"/>
</dbReference>
<dbReference type="GO" id="GO:0009725">
    <property type="term" value="P:response to hormone"/>
    <property type="evidence" value="ECO:0000270"/>
    <property type="project" value="RGD"/>
</dbReference>
<dbReference type="GO" id="GO:0032868">
    <property type="term" value="P:response to insulin"/>
    <property type="evidence" value="ECO:0000270"/>
    <property type="project" value="RGD"/>
</dbReference>
<dbReference type="GO" id="GO:0009410">
    <property type="term" value="P:response to xenobiotic stimulus"/>
    <property type="evidence" value="ECO:0000314"/>
    <property type="project" value="RGD"/>
</dbReference>
<dbReference type="GO" id="GO:0007283">
    <property type="term" value="P:spermatogenesis"/>
    <property type="evidence" value="ECO:0007669"/>
    <property type="project" value="UniProtKB-KW"/>
</dbReference>
<dbReference type="FunFam" id="1.10.1040.10:FF:000019">
    <property type="entry name" value="3-hydroxybutyryl-CoA dehydrogenase FadB2"/>
    <property type="match status" value="1"/>
</dbReference>
<dbReference type="FunFam" id="3.40.50.720:FF:000258">
    <property type="entry name" value="Hydroxyacyl-coenzyme A dehydrogenase, mitochondrial"/>
    <property type="match status" value="1"/>
</dbReference>
<dbReference type="Gene3D" id="1.10.1040.10">
    <property type="entry name" value="N-(1-d-carboxylethyl)-l-norvaline Dehydrogenase, domain 2"/>
    <property type="match status" value="1"/>
</dbReference>
<dbReference type="Gene3D" id="3.40.50.720">
    <property type="entry name" value="NAD(P)-binding Rossmann-like Domain"/>
    <property type="match status" value="1"/>
</dbReference>
<dbReference type="InterPro" id="IPR022694">
    <property type="entry name" value="3-OHacyl-CoA_DH"/>
</dbReference>
<dbReference type="InterPro" id="IPR006180">
    <property type="entry name" value="3-OHacyl-CoA_DH_CS"/>
</dbReference>
<dbReference type="InterPro" id="IPR006176">
    <property type="entry name" value="3-OHacyl-CoA_DH_NAD-bd"/>
</dbReference>
<dbReference type="InterPro" id="IPR006108">
    <property type="entry name" value="3HC_DH_C"/>
</dbReference>
<dbReference type="InterPro" id="IPR008927">
    <property type="entry name" value="6-PGluconate_DH-like_C_sf"/>
</dbReference>
<dbReference type="InterPro" id="IPR013328">
    <property type="entry name" value="6PGD_dom2"/>
</dbReference>
<dbReference type="InterPro" id="IPR052242">
    <property type="entry name" value="Mito_3-hydroxyacyl-CoA_DH"/>
</dbReference>
<dbReference type="InterPro" id="IPR036291">
    <property type="entry name" value="NAD(P)-bd_dom_sf"/>
</dbReference>
<dbReference type="PANTHER" id="PTHR43561">
    <property type="match status" value="1"/>
</dbReference>
<dbReference type="PANTHER" id="PTHR43561:SF3">
    <property type="entry name" value="HYDROXYACYL-COENZYME A DEHYDROGENASE, MITOCHONDRIAL"/>
    <property type="match status" value="1"/>
</dbReference>
<dbReference type="Pfam" id="PF00725">
    <property type="entry name" value="3HCDH"/>
    <property type="match status" value="1"/>
</dbReference>
<dbReference type="Pfam" id="PF02737">
    <property type="entry name" value="3HCDH_N"/>
    <property type="match status" value="1"/>
</dbReference>
<dbReference type="PIRSF" id="PIRSF000105">
    <property type="entry name" value="HCDH"/>
    <property type="match status" value="1"/>
</dbReference>
<dbReference type="SUPFAM" id="SSF48179">
    <property type="entry name" value="6-phosphogluconate dehydrogenase C-terminal domain-like"/>
    <property type="match status" value="1"/>
</dbReference>
<dbReference type="SUPFAM" id="SSF51735">
    <property type="entry name" value="NAD(P)-binding Rossmann-fold domains"/>
    <property type="match status" value="1"/>
</dbReference>
<dbReference type="PROSITE" id="PS00067">
    <property type="entry name" value="3HCDH"/>
    <property type="match status" value="1"/>
</dbReference>
<accession>Q9WVK7</accession>
<feature type="transit peptide" description="Mitochondrion" evidence="2">
    <location>
        <begin position="1"/>
        <end position="12"/>
    </location>
</feature>
<feature type="chain" id="PRO_0000007409" description="Hydroxyacyl-coenzyme A dehydrogenase, mitochondrial">
    <location>
        <begin position="13"/>
        <end position="314"/>
    </location>
</feature>
<feature type="binding site" evidence="2">
    <location>
        <begin position="34"/>
        <end position="39"/>
    </location>
    <ligand>
        <name>NAD(+)</name>
        <dbReference type="ChEBI" id="CHEBI:57540"/>
    </ligand>
</feature>
<feature type="binding site" evidence="2">
    <location>
        <position position="57"/>
    </location>
    <ligand>
        <name>NAD(+)</name>
        <dbReference type="ChEBI" id="CHEBI:57540"/>
    </ligand>
</feature>
<feature type="binding site" evidence="2">
    <location>
        <position position="73"/>
    </location>
    <ligand>
        <name>CoA</name>
        <dbReference type="ChEBI" id="CHEBI:57287"/>
    </ligand>
</feature>
<feature type="binding site" evidence="2">
    <location>
        <position position="80"/>
    </location>
    <ligand>
        <name>CoA</name>
        <dbReference type="ChEBI" id="CHEBI:57287"/>
    </ligand>
</feature>
<feature type="binding site" evidence="2">
    <location>
        <position position="122"/>
    </location>
    <ligand>
        <name>NAD(+)</name>
        <dbReference type="ChEBI" id="CHEBI:57540"/>
    </ligand>
</feature>
<feature type="binding site" evidence="2">
    <location>
        <position position="127"/>
    </location>
    <ligand>
        <name>NAD(+)</name>
        <dbReference type="ChEBI" id="CHEBI:57540"/>
    </ligand>
</feature>
<feature type="binding site" evidence="2">
    <location>
        <position position="149"/>
    </location>
    <ligand>
        <name>CoA</name>
        <dbReference type="ChEBI" id="CHEBI:57287"/>
    </ligand>
</feature>
<feature type="binding site" evidence="2">
    <location>
        <position position="149"/>
    </location>
    <ligand>
        <name>NAD(+)</name>
        <dbReference type="ChEBI" id="CHEBI:57540"/>
    </ligand>
</feature>
<feature type="binding site" evidence="2">
    <location>
        <position position="173"/>
    </location>
    <ligand>
        <name>NAD(+)</name>
        <dbReference type="ChEBI" id="CHEBI:57540"/>
    </ligand>
</feature>
<feature type="binding site" evidence="2">
    <location>
        <position position="305"/>
    </location>
    <ligand>
        <name>NAD(+)</name>
        <dbReference type="ChEBI" id="CHEBI:57540"/>
    </ligand>
</feature>
<feature type="site" description="Important for catalytic activity" evidence="2">
    <location>
        <position position="170"/>
    </location>
</feature>
<feature type="modified residue" description="N6-acetyllysine" evidence="3">
    <location>
        <position position="75"/>
    </location>
</feature>
<feature type="modified residue" description="N6-succinyllysine" evidence="3">
    <location>
        <position position="80"/>
    </location>
</feature>
<feature type="modified residue" description="N6-acetyllysine; alternate" evidence="3">
    <location>
        <position position="81"/>
    </location>
</feature>
<feature type="modified residue" description="N6-succinyllysine; alternate" evidence="3">
    <location>
        <position position="81"/>
    </location>
</feature>
<feature type="modified residue" description="N6-acetyllysine; alternate" evidence="3">
    <location>
        <position position="87"/>
    </location>
</feature>
<feature type="modified residue" description="N6-succinyllysine; alternate" evidence="3">
    <location>
        <position position="87"/>
    </location>
</feature>
<feature type="modified residue" description="N6-acetyllysine" evidence="3">
    <location>
        <position position="125"/>
    </location>
</feature>
<feature type="modified residue" description="N6-(2-hydroxyisobutyryl)lysine" evidence="2">
    <location>
        <position position="127"/>
    </location>
</feature>
<feature type="modified residue" description="N6-acetyllysine; alternate" evidence="3">
    <location>
        <position position="136"/>
    </location>
</feature>
<feature type="modified residue" description="N6-succinyllysine; alternate" evidence="3">
    <location>
        <position position="136"/>
    </location>
</feature>
<feature type="modified residue" description="N6-acetyllysine" evidence="3">
    <location>
        <position position="179"/>
    </location>
</feature>
<feature type="modified residue" description="N6-acetyllysine; alternate" evidence="2">
    <location>
        <position position="185"/>
    </location>
</feature>
<feature type="modified residue" description="N6-succinyllysine; alternate" evidence="3">
    <location>
        <position position="185"/>
    </location>
</feature>
<feature type="modified residue" description="N6-acetyllysine; alternate" evidence="3">
    <location>
        <position position="192"/>
    </location>
</feature>
<feature type="modified residue" description="N6-succinyllysine; alternate" evidence="3">
    <location>
        <position position="192"/>
    </location>
</feature>
<feature type="modified residue" description="N6-acetyllysine; alternate" evidence="2">
    <location>
        <position position="202"/>
    </location>
</feature>
<feature type="modified residue" description="N6-succinyllysine; alternate" evidence="3">
    <location>
        <position position="202"/>
    </location>
</feature>
<feature type="modified residue" description="N6-succinyllysine" evidence="3">
    <location>
        <position position="206"/>
    </location>
</feature>
<feature type="modified residue" description="N6-acetyllysine; alternate" evidence="3">
    <location>
        <position position="212"/>
    </location>
</feature>
<feature type="modified residue" description="N6-succinyllysine; alternate" evidence="3">
    <location>
        <position position="212"/>
    </location>
</feature>
<feature type="modified residue" description="N6-acetyllysine; alternate" evidence="2">
    <location>
        <position position="241"/>
    </location>
</feature>
<feature type="modified residue" description="N6-succinyllysine; alternate" evidence="3">
    <location>
        <position position="241"/>
    </location>
</feature>
<feature type="modified residue" description="N6-acetyllysine; alternate" evidence="2">
    <location>
        <position position="312"/>
    </location>
</feature>
<feature type="modified residue" description="N6-succinyllysine; alternate" evidence="3">
    <location>
        <position position="312"/>
    </location>
</feature>
<proteinExistence type="evidence at transcript level"/>